<keyword id="KW-0007">Acetylation</keyword>
<keyword id="KW-0025">Alternative splicing</keyword>
<keyword id="KW-1017">Isopeptide bond</keyword>
<keyword id="KW-0488">Methylation</keyword>
<keyword id="KW-0539">Nucleus</keyword>
<keyword id="KW-0597">Phosphoprotein</keyword>
<keyword id="KW-1185">Reference proteome</keyword>
<keyword id="KW-0694">RNA-binding</keyword>
<keyword id="KW-0804">Transcription</keyword>
<keyword id="KW-0805">Transcription regulation</keyword>
<keyword id="KW-0832">Ubl conjugation</keyword>
<comment type="function">
    <text evidence="2 3">Plays an important role in the ligand-dependent activation of estrogen receptor target genes. May play a role in the silencing of fetal globin genes. Recruits the 5FMC complex to ZNF148, leading to desumoylation of ZNF148 and subsequent transactivation of ZNF148 target genes. Required for the tumorigenicity of glioblastoma cells. Binds to 5-hydroxymethylcytosine (5hmC) and associates with the methylosome complex containing PRMT1, PRMT5, MEP50 and ERH. The CHTOP-methylosome complex associated with 5hmC methylates H4R3 and transactivates genes involved in glioblastomagenesis (By similarity).</text>
</comment>
<comment type="subunit">
    <text evidence="2 3">Interacts with PRMT1 and PRMT5. Interacts with the 5FMC complex; the interaction is methylation-dependent. Interacts with FYTTD1, SET and PRC1 complex members CBX4, RNF2 and PHC2; the interactions are methylation-independent. Interacts with ZNF148. Interacts with WDR77 and ER (By similarity).</text>
</comment>
<comment type="subcellular location">
    <subcellularLocation>
        <location evidence="3">Nucleus</location>
    </subcellularLocation>
    <subcellularLocation>
        <location evidence="3">Nucleus</location>
        <location evidence="3">Nucleolus</location>
    </subcellularLocation>
    <subcellularLocation>
        <location evidence="3">Nucleus</location>
        <location evidence="3">Nucleoplasm</location>
    </subcellularLocation>
    <subcellularLocation>
        <location evidence="3">Nucleus speckle</location>
    </subcellularLocation>
    <text evidence="2 3">Mostly associated with facultative heterochromatin (By similarity). Localizes to regions surrounding nuclear speckles known as perispeckles in which TREX complex assembly seems to occur (By similarity).</text>
</comment>
<comment type="alternative products">
    <event type="alternative splicing"/>
    <isoform>
        <id>Q498T2-1</id>
        <name>1</name>
        <sequence type="displayed"/>
    </isoform>
    <isoform>
        <id>Q498T2-2</id>
        <name>2</name>
        <name>SRAG-5</name>
        <sequence type="described" ref="VSP_040497"/>
    </isoform>
</comment>
<comment type="PTM">
    <text evidence="2">Asymmetrically methylated by PRMT1. Symmetrically methylated by PRMT5 (By similarity).</text>
</comment>
<protein>
    <recommendedName>
        <fullName>Chromatin target of PRMT1 protein</fullName>
    </recommendedName>
    <alternativeName>
        <fullName>Friend of PRMT1 protein</fullName>
    </alternativeName>
    <alternativeName>
        <fullName>Small arginine- and glycine-rich protein</fullName>
        <shortName>SRAG</shortName>
    </alternativeName>
</protein>
<organism>
    <name type="scientific">Rattus norvegicus</name>
    <name type="common">Rat</name>
    <dbReference type="NCBI Taxonomy" id="10116"/>
    <lineage>
        <taxon>Eukaryota</taxon>
        <taxon>Metazoa</taxon>
        <taxon>Chordata</taxon>
        <taxon>Craniata</taxon>
        <taxon>Vertebrata</taxon>
        <taxon>Euteleostomi</taxon>
        <taxon>Mammalia</taxon>
        <taxon>Eutheria</taxon>
        <taxon>Euarchontoglires</taxon>
        <taxon>Glires</taxon>
        <taxon>Rodentia</taxon>
        <taxon>Myomorpha</taxon>
        <taxon>Muroidea</taxon>
        <taxon>Muridae</taxon>
        <taxon>Murinae</taxon>
        <taxon>Rattus</taxon>
    </lineage>
</organism>
<feature type="initiator methionine" description="Removed" evidence="3">
    <location>
        <position position="1"/>
    </location>
</feature>
<feature type="chain" id="PRO_0000089265" description="Chromatin target of PRMT1 protein">
    <location>
        <begin position="2"/>
        <end position="248"/>
    </location>
</feature>
<feature type="region of interest" description="Disordered" evidence="4">
    <location>
        <begin position="151"/>
        <end position="204"/>
    </location>
</feature>
<feature type="region of interest" description="Interaction with PRMT1" evidence="1">
    <location>
        <begin position="153"/>
        <end position="206"/>
    </location>
</feature>
<feature type="short sequence motif" description="GAR motif; involved in 5hmC binding" evidence="3">
    <location>
        <begin position="194"/>
        <end position="203"/>
    </location>
</feature>
<feature type="compositionally biased region" description="Gly residues" evidence="4">
    <location>
        <begin position="157"/>
        <end position="195"/>
    </location>
</feature>
<feature type="modified residue" description="N-acetylalanine" evidence="3">
    <location>
        <position position="2"/>
    </location>
</feature>
<feature type="modified residue" description="Phosphoserine" evidence="3">
    <location>
        <position position="40"/>
    </location>
</feature>
<feature type="modified residue" description="Phosphoserine" evidence="3">
    <location>
        <position position="49"/>
    </location>
</feature>
<feature type="modified residue" description="Phosphoserine" evidence="3">
    <location>
        <position position="64"/>
    </location>
</feature>
<feature type="modified residue" description="Phosphothreonine" evidence="3">
    <location>
        <position position="242"/>
    </location>
</feature>
<feature type="cross-link" description="Glycyl lysine isopeptide (Lys-Gly) (interchain with G-Cter in SUMO2)" evidence="3">
    <location>
        <position position="70"/>
    </location>
</feature>
<feature type="splice variant" id="VSP_040497" description="In isoform 2." evidence="5">
    <location>
        <begin position="134"/>
        <end position="179"/>
    </location>
</feature>
<gene>
    <name type="primary">Chtop</name>
    <name type="synonym">Fop</name>
</gene>
<dbReference type="EMBL" id="BC081985">
    <property type="protein sequence ID" value="AAH81985.1"/>
    <property type="molecule type" value="mRNA"/>
</dbReference>
<dbReference type="EMBL" id="BC100084">
    <property type="protein sequence ID" value="AAI00085.1"/>
    <property type="molecule type" value="mRNA"/>
</dbReference>
<dbReference type="RefSeq" id="NP_001014197.1">
    <molecule id="Q498T2-2"/>
    <property type="nucleotide sequence ID" value="NM_001014175.3"/>
</dbReference>
<dbReference type="RefSeq" id="NP_001386653.1">
    <molecule id="Q498T2-1"/>
    <property type="nucleotide sequence ID" value="NM_001399724.1"/>
</dbReference>
<dbReference type="RefSeq" id="XP_006232775.1">
    <property type="nucleotide sequence ID" value="XM_006232713.3"/>
</dbReference>
<dbReference type="RefSeq" id="XP_063138237.1">
    <molecule id="Q498T2-1"/>
    <property type="nucleotide sequence ID" value="XM_063282167.1"/>
</dbReference>
<dbReference type="RefSeq" id="XP_063138238.1">
    <molecule id="Q498T2-2"/>
    <property type="nucleotide sequence ID" value="XM_063282168.1"/>
</dbReference>
<dbReference type="SMR" id="Q498T2"/>
<dbReference type="FunCoup" id="Q498T2">
    <property type="interactions" value="3014"/>
</dbReference>
<dbReference type="STRING" id="10116.ENSRNOP00000010455"/>
<dbReference type="iPTMnet" id="Q498T2"/>
<dbReference type="PhosphoSitePlus" id="Q498T2"/>
<dbReference type="jPOST" id="Q498T2"/>
<dbReference type="PaxDb" id="10116-ENSRNOP00000010455"/>
<dbReference type="Ensembl" id="ENSRNOT00000010455.9">
    <molecule id="Q498T2-1"/>
    <property type="protein sequence ID" value="ENSRNOP00000010455.5"/>
    <property type="gene ID" value="ENSRNOG00000012760.9"/>
</dbReference>
<dbReference type="Ensembl" id="ENSRNOT00000017561.8">
    <molecule id="Q498T2-2"/>
    <property type="protein sequence ID" value="ENSRNOP00000017561.4"/>
    <property type="gene ID" value="ENSRNOG00000012760.9"/>
</dbReference>
<dbReference type="GeneID" id="361990"/>
<dbReference type="KEGG" id="rno:361990"/>
<dbReference type="UCSC" id="RGD:1359407">
    <molecule id="Q498T2-1"/>
    <property type="organism name" value="rat"/>
</dbReference>
<dbReference type="AGR" id="RGD:1359407"/>
<dbReference type="CTD" id="26097"/>
<dbReference type="RGD" id="1359407">
    <property type="gene designation" value="Chtop"/>
</dbReference>
<dbReference type="eggNOG" id="ENOG502QV0X">
    <property type="taxonomic scope" value="Eukaryota"/>
</dbReference>
<dbReference type="GeneTree" id="ENSGT00390000002869"/>
<dbReference type="HOGENOM" id="CLU_087638_0_0_1"/>
<dbReference type="InParanoid" id="Q498T2"/>
<dbReference type="OMA" id="KIQMQRQ"/>
<dbReference type="PhylomeDB" id="Q498T2"/>
<dbReference type="Reactome" id="R-RNO-159236">
    <property type="pathway name" value="Transport of Mature mRNA derived from an Intron-Containing Transcript"/>
</dbReference>
<dbReference type="Reactome" id="R-RNO-72187">
    <property type="pathway name" value="mRNA 3'-end processing"/>
</dbReference>
<dbReference type="Reactome" id="R-RNO-73856">
    <property type="pathway name" value="RNA Polymerase II Transcription Termination"/>
</dbReference>
<dbReference type="PRO" id="PR:Q498T2"/>
<dbReference type="Proteomes" id="UP000002494">
    <property type="component" value="Chromosome 2"/>
</dbReference>
<dbReference type="Bgee" id="ENSRNOG00000012760">
    <property type="expression patterns" value="Expressed in thymus and 20 other cell types or tissues"/>
</dbReference>
<dbReference type="GO" id="GO:0016607">
    <property type="term" value="C:nuclear speck"/>
    <property type="evidence" value="ECO:0000266"/>
    <property type="project" value="RGD"/>
</dbReference>
<dbReference type="GO" id="GO:0005730">
    <property type="term" value="C:nucleolus"/>
    <property type="evidence" value="ECO:0007669"/>
    <property type="project" value="UniProtKB-SubCell"/>
</dbReference>
<dbReference type="GO" id="GO:0000346">
    <property type="term" value="C:transcription export complex"/>
    <property type="evidence" value="ECO:0000266"/>
    <property type="project" value="RGD"/>
</dbReference>
<dbReference type="GO" id="GO:0008327">
    <property type="term" value="F:methyl-CpG binding"/>
    <property type="evidence" value="ECO:0000250"/>
    <property type="project" value="UniProtKB"/>
</dbReference>
<dbReference type="GO" id="GO:0003723">
    <property type="term" value="F:RNA binding"/>
    <property type="evidence" value="ECO:0007669"/>
    <property type="project" value="UniProtKB-KW"/>
</dbReference>
<dbReference type="GO" id="GO:0006338">
    <property type="term" value="P:chromatin remodeling"/>
    <property type="evidence" value="ECO:0000250"/>
    <property type="project" value="UniProtKB"/>
</dbReference>
<dbReference type="GO" id="GO:0001701">
    <property type="term" value="P:in utero embryonic development"/>
    <property type="evidence" value="ECO:0000266"/>
    <property type="project" value="RGD"/>
</dbReference>
<dbReference type="GO" id="GO:0006406">
    <property type="term" value="P:mRNA export from nucleus"/>
    <property type="evidence" value="ECO:0000266"/>
    <property type="project" value="RGD"/>
</dbReference>
<dbReference type="InterPro" id="IPR052656">
    <property type="entry name" value="CTOP_PRMT1"/>
</dbReference>
<dbReference type="InterPro" id="IPR025715">
    <property type="entry name" value="FoP_C"/>
</dbReference>
<dbReference type="PANTHER" id="PTHR48426">
    <property type="entry name" value="CHROMATIN TARGET OF PRMT1 PROTEIN"/>
    <property type="match status" value="1"/>
</dbReference>
<dbReference type="PANTHER" id="PTHR48426:SF1">
    <property type="entry name" value="CHROMATIN TARGET OF PRMT1 PROTEIN"/>
    <property type="match status" value="1"/>
</dbReference>
<dbReference type="Pfam" id="PF13865">
    <property type="entry name" value="FoP_duplication"/>
    <property type="match status" value="1"/>
</dbReference>
<dbReference type="SMART" id="SM01218">
    <property type="entry name" value="FoP_duplication"/>
    <property type="match status" value="1"/>
</dbReference>
<evidence type="ECO:0000250" key="1"/>
<evidence type="ECO:0000250" key="2">
    <source>
        <dbReference type="UniProtKB" id="Q9CY57"/>
    </source>
</evidence>
<evidence type="ECO:0000250" key="3">
    <source>
        <dbReference type="UniProtKB" id="Q9Y3Y2"/>
    </source>
</evidence>
<evidence type="ECO:0000256" key="4">
    <source>
        <dbReference type="SAM" id="MobiDB-lite"/>
    </source>
</evidence>
<evidence type="ECO:0000303" key="5">
    <source>
    </source>
</evidence>
<reference key="1">
    <citation type="journal article" date="2004" name="Genome Res.">
        <title>The status, quality, and expansion of the NIH full-length cDNA project: the Mammalian Gene Collection (MGC).</title>
        <authorList>
            <consortium name="The MGC Project Team"/>
        </authorList>
    </citation>
    <scope>NUCLEOTIDE SEQUENCE [LARGE SCALE MRNA] (ISOFORMS 1 AND 2)</scope>
    <source>
        <tissue>Kidney</tissue>
        <tissue>Thymus</tissue>
    </source>
</reference>
<name>CHTOP_RAT</name>
<proteinExistence type="evidence at transcript level"/>
<sequence>MAAQSAPKVVLKSTTKMSLNERFTNMLKNKQPMPVNIWASMQQQQQLASARNRRLAQQMENRPSVQAALKLKQSLKQRLGKSNIQARLGRPIGALARGAIGGRSLPIIQRGLPRGGLRGGRATRTLLRGGMSLRGQNLLRGGRAVAPRMGLRRGGVRGRGGPGRGGLGRGAMGRGGIGGRGRGMIGRGRGGFGGRGRGRGRGRGALTRPVLTKEQLDNQLDAYMSKTKGHLDAELDAYMAQTDPETND</sequence>
<accession>Q498T2</accession>
<accession>Q66H75</accession>